<keyword id="KW-0067">ATP-binding</keyword>
<keyword id="KW-0167">Capsid protein</keyword>
<keyword id="KW-0191">Covalent protein-RNA linkage</keyword>
<keyword id="KW-0347">Helicase</keyword>
<keyword id="KW-1035">Host cytoplasm</keyword>
<keyword id="KW-1036">Host cytoplasmic vesicle</keyword>
<keyword id="KW-1043">Host membrane</keyword>
<keyword id="KW-1048">Host nucleus</keyword>
<keyword id="KW-0945">Host-virus interaction</keyword>
<keyword id="KW-0378">Hydrolase</keyword>
<keyword id="KW-0407">Ion channel</keyword>
<keyword id="KW-0406">Ion transport</keyword>
<keyword id="KW-0449">Lipoprotein</keyword>
<keyword id="KW-0472">Membrane</keyword>
<keyword id="KW-0519">Myristate</keyword>
<keyword id="KW-0547">Nucleotide-binding</keyword>
<keyword id="KW-0548">Nucleotidyltransferase</keyword>
<keyword id="KW-0597">Phosphoprotein</keyword>
<keyword id="KW-0645">Protease</keyword>
<keyword id="KW-1185">Reference proteome</keyword>
<keyword id="KW-0694">RNA-binding</keyword>
<keyword id="KW-0696">RNA-directed RNA polymerase</keyword>
<keyword id="KW-1143">T=pseudo3 icosahedral capsid protein</keyword>
<keyword id="KW-0788">Thiol protease</keyword>
<keyword id="KW-0808">Transferase</keyword>
<keyword id="KW-0813">Transport</keyword>
<keyword id="KW-1161">Viral attachment to host cell</keyword>
<keyword id="KW-1182">Viral ion channel</keyword>
<keyword id="KW-0693">Viral RNA replication</keyword>
<keyword id="KW-0946">Virion</keyword>
<keyword id="KW-1160">Virus entry into host cell</keyword>
<reference key="1">
    <citation type="journal article" date="2008" name="Proc. Natl. Acad. Sci. U.S.A.">
        <title>A highly prevalent and genetically diversified Picornaviridae genus in South Asian children.</title>
        <authorList>
            <person name="Kapoor A."/>
            <person name="Victoria J."/>
            <person name="Simmonds P."/>
            <person name="Slikas E."/>
            <person name="Chieochansin T."/>
            <person name="Naeem A."/>
            <person name="Shaukat S."/>
            <person name="Sharif S."/>
            <person name="Alam M.M."/>
            <person name="Angez M."/>
            <person name="Wang C."/>
            <person name="Shafer R.W."/>
            <person name="Zaidi S."/>
            <person name="Delwart E."/>
        </authorList>
    </citation>
    <scope>NUCLEOTIDE SEQUENCE [LARGE SCALE GENOMIC DNA]</scope>
    <source>
        <strain>Isolate Human/Pakistan/0553/-</strain>
    </source>
</reference>
<evidence type="ECO:0000250" key="1"/>
<evidence type="ECO:0000250" key="2">
    <source>
        <dbReference type="UniProtKB" id="P03300"/>
    </source>
</evidence>
<evidence type="ECO:0000250" key="3">
    <source>
        <dbReference type="UniProtKB" id="P03304"/>
    </source>
</evidence>
<evidence type="ECO:0000250" key="4">
    <source>
        <dbReference type="UniProtKB" id="P03305"/>
    </source>
</evidence>
<evidence type="ECO:0000250" key="5">
    <source>
        <dbReference type="UniProtKB" id="P08545"/>
    </source>
</evidence>
<evidence type="ECO:0000250" key="6">
    <source>
        <dbReference type="UniProtKB" id="P08617"/>
    </source>
</evidence>
<evidence type="ECO:0000250" key="7">
    <source>
        <dbReference type="UniProtKB" id="P12296"/>
    </source>
</evidence>
<evidence type="ECO:0000250" key="8">
    <source>
        <dbReference type="UniProtKB" id="Q66282"/>
    </source>
</evidence>
<evidence type="ECO:0000250" key="9">
    <source>
        <dbReference type="UniProtKB" id="Q66765"/>
    </source>
</evidence>
<evidence type="ECO:0000255" key="10">
    <source>
        <dbReference type="PROSITE-ProRule" id="PRU00539"/>
    </source>
</evidence>
<evidence type="ECO:0000255" key="11">
    <source>
        <dbReference type="PROSITE-ProRule" id="PRU00551"/>
    </source>
</evidence>
<evidence type="ECO:0000255" key="12">
    <source>
        <dbReference type="PROSITE-ProRule" id="PRU01222"/>
    </source>
</evidence>
<evidence type="ECO:0000256" key="13">
    <source>
        <dbReference type="SAM" id="MobiDB-lite"/>
    </source>
</evidence>
<evidence type="ECO:0000305" key="14"/>
<name>POLG_COSAA</name>
<proteinExistence type="inferred from homology"/>
<comment type="function">
    <molecule>Capsid protein VP1</molecule>
    <text evidence="7">Forms an icosahedral capsid of pseudo T=3 symmetry with capsid proteins VP2 and VP3. Together they form an icosahedral capsid composed of 60 copies of each VP1, VP2, and VP3, with a diameter of approximately 300 Angstroms. VP4 lies on the inner surface of the protein shell formed by VP1, VP2 and VP3. All the three latter proteins contain a beta-sheet structure called beta-barrel jelly roll. VP1 is situated at the 12 fivefold axes, whereas VP2 and VP3 are located at the quasi-sixfold axes.</text>
</comment>
<comment type="function">
    <molecule>Capsid protein VP2</molecule>
    <text evidence="7">Forms an icosahedral capsid of pseudo T=3 symmetry with capsid proteins VP2 and VP3. Together they form an icosahedral capsid composed of 60 copies of each VP1, VP2, and VP3, with a diameter of approximately 300 Angstroms. VP4 lies on the inner surface of the protein shell formed by VP1, VP2 and VP3. All the three latter proteins contain a beta-sheet structure called beta-barrel jelly roll. VP1 is situated at the 12 fivefold axes, whereas VP2 and VP3 are located at the quasi-sixfold axes.</text>
</comment>
<comment type="function">
    <molecule>Capsid protein VP3</molecule>
    <text evidence="7">Forms an icosahedral capsid of pseudo T=3 symmetry with capsid proteins VP2 and VP3. Together they form an icosahedral capsid composed of 60 copies of each VP1, VP2, and VP3, with a diameter of approximately 300 Angstroms. VP4 lies on the inner surface of the protein shell formed by VP1, VP2 and VP3. All the three latter proteins contain a beta-sheet structure called beta-barrel jelly roll. VP1 is situated at the 12 fivefold axes, whereas VP2 and VP3 are located at the quasi-sixfold axes.</text>
</comment>
<comment type="function">
    <molecule>Capsid protein VP4</molecule>
    <text evidence="2 7">Lies on the inner surface of the capsid shell (By similarity). After binding to the host receptor, the capsid undergoes conformational changes (By similarity). Capsid protein VP4 is released, capsid protein VP1 N-terminus is externalized, and together, they shape a pore in the host membrane through which the viral genome is translocated into the host cell cytoplasm (By similarity). After genome has been released, the channel shrinks (By similarity).</text>
</comment>
<comment type="function">
    <molecule>Capsid protein VP0</molecule>
    <text evidence="6">VP0 precursor is a component of immature procapsids.</text>
</comment>
<comment type="function">
    <molecule>Protein 2A</molecule>
    <text evidence="9">Involved in host translation shutoff by inhibiting cap-dependent mRNA translation (By similarity). Nuclear localization is required for this function (By similarity). The resulting inhibition of cellular protein synthesis serves to ensure maximal viral gene expression and to evade host immune response (By similarity).</text>
</comment>
<comment type="function">
    <molecule>Protein 2B</molecule>
    <text evidence="1">Affects membrane integrity and causes an increase in membrane permeability.</text>
</comment>
<comment type="function">
    <molecule>Protein 2C</molecule>
    <text evidence="3 4 5">Associates with and induces structural rearrangements of intracellular membranes (By similarity). It displays RNA-binding, nucleotide binding and NTPase activities (By similarity). Interacts with IFIH1/MDA5 to inhibit the induction of the IFN-beta signal pathway (By similarity).</text>
</comment>
<comment type="function">
    <molecule>Protein 3A</molecule>
    <text evidence="1">Serves as membrane anchor via its hydrophobic domain.</text>
</comment>
<comment type="function">
    <molecule>VPg</molecule>
    <text evidence="3">Forms a primer, VPg-pU, which is utilized by the polymerase for the initiation of RNA chains.</text>
</comment>
<comment type="function">
    <molecule>Protease 3C</molecule>
    <text evidence="3 7">Cysteine protease that generates mature viral proteins from the precursor polyprotein (By similarity). In addition to its proteolytic activity, it binds to viral RNA, and thus influences viral genome replication. RNA and substrate cooperatively bind to the protease. Cleaves host PABP1, this cleavage is important for viral replication (By similarity). Cleaves host TANK and disrupts the TANK-TBK1-IKKepsilon-IRF3 complex, thereby inhibiting the induction of the IFN-beta signal pathway (By similarity).</text>
</comment>
<comment type="function">
    <molecule>RNA-directed RNA polymerase</molecule>
    <text evidence="7">Replicates the genomic and antigenomic RNAs by recognizing replications specific signals (By similarity). Performs VPg uridylylation (By similarity).</text>
</comment>
<comment type="catalytic activity">
    <reaction evidence="10">
        <text>RNA(n) + a ribonucleoside 5'-triphosphate = RNA(n+1) + diphosphate</text>
        <dbReference type="Rhea" id="RHEA:21248"/>
        <dbReference type="Rhea" id="RHEA-COMP:14527"/>
        <dbReference type="Rhea" id="RHEA-COMP:17342"/>
        <dbReference type="ChEBI" id="CHEBI:33019"/>
        <dbReference type="ChEBI" id="CHEBI:61557"/>
        <dbReference type="ChEBI" id="CHEBI:140395"/>
        <dbReference type="EC" id="2.7.7.48"/>
    </reaction>
</comment>
<comment type="catalytic activity">
    <reaction evidence="14">
        <text>ATP + H2O = ADP + phosphate + H(+)</text>
        <dbReference type="Rhea" id="RHEA:13065"/>
        <dbReference type="ChEBI" id="CHEBI:15377"/>
        <dbReference type="ChEBI" id="CHEBI:15378"/>
        <dbReference type="ChEBI" id="CHEBI:30616"/>
        <dbReference type="ChEBI" id="CHEBI:43474"/>
        <dbReference type="ChEBI" id="CHEBI:456216"/>
        <dbReference type="EC" id="3.6.4.13"/>
    </reaction>
</comment>
<comment type="catalytic activity">
    <reaction evidence="12">
        <text>Selective cleavage of Gln-|-Gly bond in the poliovirus polyprotein. In other picornavirus reactions Glu may be substituted for Gln, and Ser or Thr for Gly.</text>
        <dbReference type="EC" id="3.4.22.28"/>
    </reaction>
</comment>
<comment type="subunit">
    <molecule>Protein 2A</molecule>
    <text evidence="3 9">Interacts with host EIF4E (By similarity).</text>
</comment>
<comment type="subunit">
    <molecule>Protein 2C</molecule>
    <text evidence="3 9">Interacts with host IFIH1/MDA5; this interaction inhibits the induction of the IFN-beta signal pathway (By similarity).</text>
</comment>
<comment type="subcellular location">
    <molecule>Capsid protein VP2</molecule>
    <subcellularLocation>
        <location evidence="7">Virion</location>
    </subcellularLocation>
    <subcellularLocation>
        <location evidence="14">Host cytoplasm</location>
    </subcellularLocation>
</comment>
<comment type="subcellular location">
    <molecule>Capsid protein VP3</molecule>
    <subcellularLocation>
        <location evidence="7">Virion</location>
    </subcellularLocation>
    <subcellularLocation>
        <location evidence="14">Host cytoplasm</location>
    </subcellularLocation>
</comment>
<comment type="subcellular location">
    <molecule>Capsid protein VP1</molecule>
    <subcellularLocation>
        <location evidence="7">Virion</location>
    </subcellularLocation>
    <subcellularLocation>
        <location evidence="14">Host cytoplasm</location>
    </subcellularLocation>
</comment>
<comment type="subcellular location">
    <molecule>Protein 2A</molecule>
    <subcellularLocation>
        <location evidence="9">Host nucleus</location>
        <location evidence="9">Host nucleolus</location>
    </subcellularLocation>
</comment>
<comment type="subcellular location">
    <molecule>Protein 2B</molecule>
    <subcellularLocation>
        <location evidence="9">Host cytoplasmic vesicle membrane</location>
        <topology evidence="9">Peripheral membrane protein</topology>
        <orientation evidence="9">Cytoplasmic side</orientation>
    </subcellularLocation>
    <text evidence="14">Probably localizes to the surface of intracellular membrane vesicles that are induced after virus infection as the site for viral RNA replication. These vesicles are probably autophagosome-like vesicles.</text>
</comment>
<comment type="subcellular location">
    <molecule>Protein 2C</molecule>
    <subcellularLocation>
        <location evidence="9">Host cytoplasmic vesicle membrane</location>
        <topology evidence="9">Peripheral membrane protein</topology>
        <orientation evidence="9">Cytoplasmic side</orientation>
    </subcellularLocation>
    <text evidence="14">Probably localizes to the surface of intracellular membrane vesicles that are induced after virus infection as the site for viral RNA replication. These vesicles are probably autophagosome-like vesicles.</text>
</comment>
<comment type="subcellular location">
    <molecule>Protein 3A</molecule>
    <subcellularLocation>
        <location evidence="3">Host cytoplasmic vesicle membrane</location>
        <topology evidence="14">Peripheral membrane protein</topology>
        <orientation evidence="14">Cytoplasmic side</orientation>
    </subcellularLocation>
    <text evidence="3">Probably localizes to the surface of intracellular membrane vesicles that are induced after virus infection as the site for viral RNA replication. These vesicles are probably autophagosome-like vesicles.</text>
</comment>
<comment type="subcellular location">
    <molecule>VPg</molecule>
    <subcellularLocation>
        <location evidence="14">Virion</location>
    </subcellularLocation>
</comment>
<comment type="subcellular location">
    <molecule>Protease 3C</molecule>
    <subcellularLocation>
        <location evidence="14">Host cytoplasm</location>
    </subcellularLocation>
</comment>
<comment type="subcellular location">
    <molecule>RNA-directed RNA polymerase</molecule>
    <subcellularLocation>
        <location evidence="9">Host cytoplasmic vesicle membrane</location>
        <topology evidence="9">Peripheral membrane protein</topology>
        <orientation evidence="9">Cytoplasmic side</orientation>
    </subcellularLocation>
    <text evidence="14">Probably localizes to the surface of intracellular membrane vesicles that are induced after virus infection as the site for viral RNA replication. These vesicles are probably autophagosome-like vesicles.</text>
</comment>
<comment type="PTM">
    <molecule>Genome polyprotein</molecule>
    <text evidence="3">Specific enzymatic cleavages by the viral protease in vivo yield a variety of precursors and mature proteins (By similarity). The polyprotein seems to be cotranslationally cleaved at the 2A/2B junction by a ribosomal skip from one codon to the next without formation of a peptide bond (By similarity). This process would release the P1-2A peptide from the translational complex (By similarity).</text>
</comment>
<comment type="PTM">
    <molecule>Capsid protein VP0</molecule>
    <text evidence="2">During virion maturation, immature virions are rendered infectious following cleavage of VP0 into VP4 and VP2. This maturation seems to be an autocatalytic event triggered by the presence of RNA in the capsid and is followed by a conformational change of the particle.</text>
</comment>
<comment type="PTM">
    <molecule>Capsid protein VP4</molecule>
    <text evidence="8">Myristoylation is required during RNA encapsidation and formation of the mature virus particle.</text>
</comment>
<comment type="PTM">
    <molecule>VPg</molecule>
    <text evidence="7">Uridylylated by the polymerase and is covalently linked to the 5'-end of genomic RNA. This uridylylated form acts as a nucleotide-peptide primer for the polymerase.</text>
</comment>
<comment type="similarity">
    <text evidence="14">Belongs to the picornaviruses polyprotein family.</text>
</comment>
<sequence length="2124" mass="235743">MGANNSKESVSSNGNEGTIVNNFYSNQYYASIDASAQGVGTSTTPENGNVSGFLGLAGSAFNALSLLASPRTETGMMMEDRVLSRTAGNTSVNSQAAEGVLQAYGTETDSNSPTSCGDDPSKGTHATDRAFVIQLLPWKQTTNSYFAQWVRLTQKLSNNLHGNVMAKNIKSHAFAKMGFEVMLQANTSPFHNGILGLFLVPEFVRKGEITDEWIDLTPTSSLVSNTELYNPQTYANFPFDAKHSFDYSDITPEQFMIFPHQLINPKDTNVATVRVPYINIAPTNDTTVHTVWTAVVMVLVPLNFSSGASPTVSLTLTITPINSVFNGLHHTAQGPIPVRPFHNFQQFSTTVPLRTEPCYGMTVTPPVDYMPLPITDLVELAKVPSFVTVANSDTTSERSFPYFSVSNTEQGRNLFKSSVVLSDLHYQHTLVANLARYFCNYRGSLQFDFIAATTAMTRGKLLISYTPPGAGEPQSIDQAMMGTYAIWDLGLQSTFNFVVPFISASDFRFNTSSVSNALNSDGWITVWLMNPLTYPPSTPPTQQILMLMSAGSDFSYRLPISPGFAEGETSEHPMDNAECGKIDDKDAGMFSGHSVGLPTPHTSTSFFYDRYRFVGIVKSVVNNTPKPVNIYDDTGKVKNLQQVFPTSDTLLPHSLMSLSPCASVCGQPISSFLFAQRANPKKTLKLRSGDEFLYRCCPFSYIKCDLEFTVVPPANSTRDYIVHWYPPGATLDAGEVAVGNTSGSNGFDDNGMNAGSSLFSYNPTFHARAPSKVSAVIPFCLPVSLLPLYFDGFPDYSTTKGMYGCSPSFSFGTIYIESGLQETYSVYIRYKDFKGYAPRPLIRTPHIRLSERARYIMADSVLPRPLTRAERDVARDLLLIAGDIESNPGPAFNPEYTAHGPVTELIQLARKPETVDNVNRLLTTLNTLMAKWNNLKDTVTDAVFLRDMVCLLVKLTSLMYLVHGQGPGAYFAAASILLADGITFFDWYEKIKIFMARKLRVSPPFFPAAQGPDLRDFVTFFNAARGAQWMIDSLKSLITCIKQWLELEEENEAVQLEKMLIDSPRHCKAINDYNRGDSFQRPTNSFEFMDRLVECATKLGKVQIATYFRNFTTADSDTSRPEPVVVVLRGKPGVGKSAAATVMAAAVSKLLVGSQSVYTLSPDTEHMDGYHGQFVTLMDDLGQNPDGEDFRCFCQMVSCAQYRPAMADLKDKGILFTSRLLIATTNLPDFNPVTISDPRALDRRITFDILVTPGSAATKNGKLDLAAALKPDGPGEHPYTSDCPILHTTGLLLKNLRNNQTMNLKDLVDMIVKRIKHKKEVGNMLDSLVAQGPTMIVGYTKDDDGIAIVDCLEEWNKIKDKKKKQLALEMVAQELKDKHEEHKGTIKLLKMFVTGLGVVAAVAGAYATMKYFTKDKPKEEEEEPEEKKEKKTEESKEAAGPYNGPTKKEIKTLKLKAQSPLMDMEKKIAQNVMPFQIFYNGKRYTQSCLAIGKRVILVNKHAFESVEHKFVVDQKEYTLDQVTAISLDCGSGVTDVCAVCLPPGPDFKSIKKHFLPFNTTMFPGTRLTILSNDHYPMSREGSFLRFEDEVPTNVGNMPFVMLYKSTSYFGMCGSVVCSRFVDGGGIIGMHCAGGGGVSVGTRLTARMIESVFDYFYPPVAQGIIENTETGPRVHVPRTSKLKRTNATYPATEKYGPAALSRYDPRLNEGVNLDEVIFSKHTQNTLVEKGSTFRSALDMAAEIYGEKFRGNDFSPLSVEDAILGIPGLDRLDPNTASGLPYTKTRRQMIDFNTGQILDDTLKCRLGQWLAGRPPQEVHYQTFLKDEIRPIEKVKAGKTRIIDVPPLDHVIAFRMLFGRFIAHYHLNFGFKTGSAIGCDPDVAWASFGFELSGFPYLYDFDYSNFDASHSTSIFEILEQKFFSPELGFDPRCSLLLKSLAVSTHCYENKRLQIAGGLPSGTAGTSVLNTVINNIIFHGALYHTYTNFERDDISMLAYGDDIVVASKFELDLVMVKAFMNRIGYKITPADKSDEFRPKCMDDICFLKRRFVKVAGVWAPVMETENLEAMLSWYKPGTLNEKLQSVSRLAHFSGRDVYDHLFKPFIRDGFDVTPWKQLHLEWLNKLSA</sequence>
<protein>
    <recommendedName>
        <fullName>Genome polyprotein</fullName>
    </recommendedName>
    <component>
        <recommendedName>
            <fullName>Capsid protein VP0</fullName>
        </recommendedName>
        <alternativeName>
            <fullName>VP4-VP2</fullName>
        </alternativeName>
    </component>
    <component>
        <recommendedName>
            <fullName>Capsid protein VP4</fullName>
        </recommendedName>
        <alternativeName>
            <fullName>P1A</fullName>
        </alternativeName>
        <alternativeName>
            <fullName>Rho</fullName>
        </alternativeName>
        <alternativeName>
            <fullName>Virion protein 4</fullName>
        </alternativeName>
    </component>
    <component>
        <recommendedName>
            <fullName>Capsid protein VP2</fullName>
        </recommendedName>
        <alternativeName>
            <fullName>Beta</fullName>
        </alternativeName>
        <alternativeName>
            <fullName>P1B</fullName>
        </alternativeName>
        <alternativeName>
            <fullName>Virion protein 2</fullName>
        </alternativeName>
    </component>
    <component>
        <recommendedName>
            <fullName>Capsid protein VP3</fullName>
        </recommendedName>
        <alternativeName>
            <fullName>Gamma</fullName>
        </alternativeName>
        <alternativeName>
            <fullName>P1C</fullName>
        </alternativeName>
        <alternativeName>
            <fullName>Virion protein 3</fullName>
        </alternativeName>
    </component>
    <component>
        <recommendedName>
            <fullName>Capsid protein VP1</fullName>
        </recommendedName>
        <alternativeName>
            <fullName>Alpha</fullName>
        </alternativeName>
        <alternativeName>
            <fullName>P1D</fullName>
        </alternativeName>
        <alternativeName>
            <fullName>Virion protein 1</fullName>
        </alternativeName>
    </component>
    <component>
        <recommendedName>
            <fullName>Protein 2A</fullName>
            <shortName>P2A</shortName>
        </recommendedName>
        <alternativeName>
            <fullName>G</fullName>
        </alternativeName>
    </component>
    <component>
        <recommendedName>
            <fullName>Protein 2B</fullName>
            <shortName>I</shortName>
            <shortName>P2B</shortName>
        </recommendedName>
    </component>
    <component>
        <recommendedName>
            <fullName>Protein 2C</fullName>
            <shortName>C</shortName>
            <shortName>P2C</shortName>
            <ecNumber>3.6.4.13</ecNumber>
        </recommendedName>
    </component>
    <component>
        <recommendedName>
            <fullName>Protein 3A</fullName>
            <shortName>P3A</shortName>
        </recommendedName>
    </component>
    <component>
        <recommendedName>
            <fullName>VPg</fullName>
            <shortName>P3B</shortName>
        </recommendedName>
        <alternativeName>
            <fullName>H</fullName>
        </alternativeName>
        <alternativeName>
            <fullName>Protein 3B</fullName>
        </alternativeName>
    </component>
    <component>
        <recommendedName>
            <fullName>Protease 3C</fullName>
            <shortName>P3C</shortName>
            <ecNumber evidence="7">3.4.22.28</ecNumber>
        </recommendedName>
        <alternativeName>
            <fullName>Picornain 3C</fullName>
        </alternativeName>
        <alternativeName>
            <fullName>p22</fullName>
        </alternativeName>
    </component>
    <component>
        <recommendedName>
            <fullName>RNA-directed RNA polymerase</fullName>
            <shortName>RdRp</shortName>
            <ecNumber evidence="10">2.7.7.48</ecNumber>
        </recommendedName>
        <alternativeName>
            <fullName>3D polymerase</fullName>
            <shortName>3Dpol</shortName>
        </alternativeName>
        <alternativeName>
            <fullName>Protein 3D</fullName>
            <shortName>3D</shortName>
        </alternativeName>
    </component>
</protein>
<accession>B8XTP8</accession>
<feature type="initiator methionine" description="Removed; by host" evidence="14">
    <location>
        <position position="1"/>
    </location>
</feature>
<feature type="chain" id="PRO_0000446193" description="Genome polyprotein">
    <location>
        <begin position="2"/>
        <end position="2124"/>
    </location>
</feature>
<feature type="chain" id="PRO_0000446194" description="Capsid protein VP0">
    <location>
        <begin position="2"/>
        <end position="333"/>
    </location>
</feature>
<feature type="chain" id="PRO_0000446195" description="Capsid protein VP4">
    <location>
        <begin position="2"/>
        <end position="68"/>
    </location>
</feature>
<feature type="chain" id="PRO_0000446196" description="Capsid protein VP2">
    <location>
        <begin position="69"/>
        <end position="333"/>
    </location>
</feature>
<feature type="chain" id="PRO_0000446197" description="Capsid protein VP3">
    <location>
        <begin position="334"/>
        <end position="568"/>
    </location>
</feature>
<feature type="chain" id="PRO_0000446198" description="Capsid protein VP1">
    <location>
        <begin position="569"/>
        <end position="859"/>
    </location>
</feature>
<feature type="chain" id="PRO_0000446199" description="Protein 2A">
    <location>
        <begin position="860"/>
        <end position="889"/>
    </location>
</feature>
<feature type="chain" id="PRO_0000446200" description="Protein 2B">
    <location>
        <begin position="890"/>
        <end position="1010"/>
    </location>
</feature>
<feature type="chain" id="PRO_0000446201" description="Protein 2C">
    <location>
        <begin position="1011"/>
        <end position="1331"/>
    </location>
</feature>
<feature type="chain" id="PRO_0000446202" description="Protein 3A">
    <location>
        <begin position="1332"/>
        <end position="1434"/>
    </location>
</feature>
<feature type="chain" id="PRO_0000446203" description="VPg">
    <location>
        <begin position="1435"/>
        <end position="1458"/>
    </location>
</feature>
<feature type="chain" id="PRO_0000446204" description="Protease 3C">
    <location>
        <begin position="1459"/>
        <end position="1661"/>
    </location>
</feature>
<feature type="chain" id="PRO_0000446205" description="RNA-directed RNA polymerase">
    <location>
        <begin position="1662"/>
        <end position="2123"/>
    </location>
</feature>
<feature type="domain" description="SF3 helicase" evidence="11">
    <location>
        <begin position="1102"/>
        <end position="1264"/>
    </location>
</feature>
<feature type="domain" description="Peptidase C3" evidence="12">
    <location>
        <begin position="1459"/>
        <end position="1648"/>
    </location>
</feature>
<feature type="domain" description="RdRp catalytic" evidence="10">
    <location>
        <begin position="1893"/>
        <end position="2011"/>
    </location>
</feature>
<feature type="region of interest" description="Host EIF4E binding" evidence="9">
    <location>
        <begin position="873"/>
        <end position="880"/>
    </location>
</feature>
<feature type="region of interest" description="Disordered" evidence="13">
    <location>
        <begin position="1415"/>
        <end position="1446"/>
    </location>
</feature>
<feature type="compositionally biased region" description="Basic and acidic residues" evidence="13">
    <location>
        <begin position="1415"/>
        <end position="1437"/>
    </location>
</feature>
<feature type="active site" description="For protease 3C activity" evidence="12">
    <location>
        <position position="1501"/>
    </location>
</feature>
<feature type="active site" description="For protease 3C activity" evidence="12">
    <location>
        <position position="1535"/>
    </location>
</feature>
<feature type="active site" description="For protease 3C activity" evidence="12">
    <location>
        <position position="1612"/>
    </location>
</feature>
<feature type="active site" description="For RdRp activity" evidence="7">
    <location>
        <position position="1899"/>
    </location>
</feature>
<feature type="active site" description="For RdRp activity" evidence="7">
    <location>
        <position position="1997"/>
    </location>
</feature>
<feature type="binding site" evidence="11">
    <location>
        <begin position="1130"/>
        <end position="1137"/>
    </location>
    <ligand>
        <name>ATP</name>
        <dbReference type="ChEBI" id="CHEBI:30616"/>
    </ligand>
</feature>
<feature type="site" description="Cleavage">
    <location>
        <begin position="68"/>
        <end position="69"/>
    </location>
</feature>
<feature type="site" description="Cleavage; by protease 3C" evidence="3">
    <location>
        <begin position="333"/>
        <end position="334"/>
    </location>
</feature>
<feature type="site" description="Cleavage; by protease 3C" evidence="3">
    <location>
        <begin position="568"/>
        <end position="569"/>
    </location>
</feature>
<feature type="site" description="Cleavage; by protease 3C" evidence="3">
    <location>
        <begin position="859"/>
        <end position="860"/>
    </location>
</feature>
<feature type="site" description="Cleavage; by ribosomal skip" evidence="3">
    <location>
        <begin position="889"/>
        <end position="890"/>
    </location>
</feature>
<feature type="site" description="Cleavage; by protease 3C" evidence="3">
    <location>
        <begin position="1010"/>
        <end position="1011"/>
    </location>
</feature>
<feature type="site" description="Cleavage; by protease 3C" evidence="3">
    <location>
        <begin position="1331"/>
        <end position="1332"/>
    </location>
</feature>
<feature type="site" description="Cleavage; by protease 3C" evidence="3">
    <location>
        <begin position="1434"/>
        <end position="1435"/>
    </location>
</feature>
<feature type="site" description="Cleavage; by protease 3C" evidence="3">
    <location>
        <begin position="1458"/>
        <end position="1459"/>
    </location>
</feature>
<feature type="site" description="Cleavage; by protease 3C" evidence="3">
    <location>
        <begin position="1661"/>
        <end position="1662"/>
    </location>
</feature>
<feature type="modified residue" description="O-(5'-phospho-RNA)-tyrosine" evidence="2">
    <location>
        <position position="1442"/>
    </location>
</feature>
<feature type="lipid moiety-binding region" description="N-myristoyl glycine; by host" evidence="8">
    <location>
        <position position="2"/>
    </location>
</feature>
<organism>
    <name type="scientific">Cosavirus A (isolate Human/Pakistan/0553/-)</name>
    <name type="common">HCoSV-A</name>
    <dbReference type="NCBI Taxonomy" id="1554483"/>
    <lineage>
        <taxon>Viruses</taxon>
        <taxon>Riboviria</taxon>
        <taxon>Orthornavirae</taxon>
        <taxon>Pisuviricota</taxon>
        <taxon>Pisoniviricetes</taxon>
        <taxon>Picornavirales</taxon>
        <taxon>Picornaviridae</taxon>
        <taxon>Caphthovirinae</taxon>
        <taxon>Cosavirus</taxon>
        <taxon>Cosavirus A</taxon>
    </lineage>
</organism>
<dbReference type="EC" id="3.6.4.13"/>
<dbReference type="EC" id="3.4.22.28" evidence="7"/>
<dbReference type="EC" id="2.7.7.48" evidence="10"/>
<dbReference type="EMBL" id="FJ438902">
    <property type="protein sequence ID" value="ACL15185.1"/>
    <property type="molecule type" value="Genomic_RNA"/>
</dbReference>
<dbReference type="RefSeq" id="YP_002956074.1">
    <property type="nucleotide sequence ID" value="NC_012800.1"/>
</dbReference>
<dbReference type="SMR" id="B8XTP8"/>
<dbReference type="GeneID" id="7986820"/>
<dbReference type="KEGG" id="vg:7986820"/>
<dbReference type="Proteomes" id="UP000029753">
    <property type="component" value="Segment"/>
</dbReference>
<dbReference type="GO" id="GO:0044162">
    <property type="term" value="C:host cell cytoplasmic vesicle membrane"/>
    <property type="evidence" value="ECO:0007669"/>
    <property type="project" value="UniProtKB-SubCell"/>
</dbReference>
<dbReference type="GO" id="GO:0044196">
    <property type="term" value="C:host cell nucleolus"/>
    <property type="evidence" value="ECO:0007669"/>
    <property type="project" value="UniProtKB-SubCell"/>
</dbReference>
<dbReference type="GO" id="GO:0016020">
    <property type="term" value="C:membrane"/>
    <property type="evidence" value="ECO:0007669"/>
    <property type="project" value="UniProtKB-KW"/>
</dbReference>
<dbReference type="GO" id="GO:0039618">
    <property type="term" value="C:T=pseudo3 icosahedral viral capsid"/>
    <property type="evidence" value="ECO:0007669"/>
    <property type="project" value="UniProtKB-KW"/>
</dbReference>
<dbReference type="GO" id="GO:0005524">
    <property type="term" value="F:ATP binding"/>
    <property type="evidence" value="ECO:0007669"/>
    <property type="project" value="UniProtKB-KW"/>
</dbReference>
<dbReference type="GO" id="GO:0016887">
    <property type="term" value="F:ATP hydrolysis activity"/>
    <property type="evidence" value="ECO:0007669"/>
    <property type="project" value="RHEA"/>
</dbReference>
<dbReference type="GO" id="GO:0015267">
    <property type="term" value="F:channel activity"/>
    <property type="evidence" value="ECO:0007669"/>
    <property type="project" value="UniProtKB-KW"/>
</dbReference>
<dbReference type="GO" id="GO:0004197">
    <property type="term" value="F:cysteine-type endopeptidase activity"/>
    <property type="evidence" value="ECO:0007669"/>
    <property type="project" value="UniProtKB-EC"/>
</dbReference>
<dbReference type="GO" id="GO:0003723">
    <property type="term" value="F:RNA binding"/>
    <property type="evidence" value="ECO:0007669"/>
    <property type="project" value="UniProtKB-KW"/>
</dbReference>
<dbReference type="GO" id="GO:0003724">
    <property type="term" value="F:RNA helicase activity"/>
    <property type="evidence" value="ECO:0007669"/>
    <property type="project" value="UniProtKB-EC"/>
</dbReference>
<dbReference type="GO" id="GO:0003968">
    <property type="term" value="F:RNA-directed RNA polymerase activity"/>
    <property type="evidence" value="ECO:0007669"/>
    <property type="project" value="UniProtKB-KW"/>
</dbReference>
<dbReference type="GO" id="GO:0005198">
    <property type="term" value="F:structural molecule activity"/>
    <property type="evidence" value="ECO:0007669"/>
    <property type="project" value="InterPro"/>
</dbReference>
<dbReference type="GO" id="GO:0006351">
    <property type="term" value="P:DNA-templated transcription"/>
    <property type="evidence" value="ECO:0007669"/>
    <property type="project" value="InterPro"/>
</dbReference>
<dbReference type="GO" id="GO:0034220">
    <property type="term" value="P:monoatomic ion transmembrane transport"/>
    <property type="evidence" value="ECO:0007669"/>
    <property type="project" value="UniProtKB-KW"/>
</dbReference>
<dbReference type="GO" id="GO:0006508">
    <property type="term" value="P:proteolysis"/>
    <property type="evidence" value="ECO:0007669"/>
    <property type="project" value="UniProtKB-KW"/>
</dbReference>
<dbReference type="GO" id="GO:0046718">
    <property type="term" value="P:symbiont entry into host cell"/>
    <property type="evidence" value="ECO:0007669"/>
    <property type="project" value="UniProtKB-KW"/>
</dbReference>
<dbReference type="GO" id="GO:0039694">
    <property type="term" value="P:viral RNA genome replication"/>
    <property type="evidence" value="ECO:0007669"/>
    <property type="project" value="InterPro"/>
</dbReference>
<dbReference type="GO" id="GO:0019062">
    <property type="term" value="P:virion attachment to host cell"/>
    <property type="evidence" value="ECO:0007669"/>
    <property type="project" value="UniProtKB-KW"/>
</dbReference>
<dbReference type="CDD" id="cd00205">
    <property type="entry name" value="rhv_like"/>
    <property type="match status" value="2"/>
</dbReference>
<dbReference type="Gene3D" id="1.20.960.20">
    <property type="match status" value="1"/>
</dbReference>
<dbReference type="Gene3D" id="2.60.120.20">
    <property type="match status" value="3"/>
</dbReference>
<dbReference type="Gene3D" id="3.30.70.270">
    <property type="match status" value="2"/>
</dbReference>
<dbReference type="Gene3D" id="4.10.90.10">
    <property type="entry name" value="Capsid protein VP4 superfamily, Picornavirus"/>
    <property type="match status" value="1"/>
</dbReference>
<dbReference type="Gene3D" id="2.40.10.10">
    <property type="entry name" value="Trypsin-like serine proteases"/>
    <property type="match status" value="2"/>
</dbReference>
<dbReference type="InterPro" id="IPR037080">
    <property type="entry name" value="Capsid_VP4_sf_Picornavirus"/>
</dbReference>
<dbReference type="InterPro" id="IPR043502">
    <property type="entry name" value="DNA/RNA_pol_sf"/>
</dbReference>
<dbReference type="InterPro" id="IPR004004">
    <property type="entry name" value="Helic/Pol/Pept_Calicivir-typ"/>
</dbReference>
<dbReference type="InterPro" id="IPR000605">
    <property type="entry name" value="Helicase_SF3_ssDNA/RNA_vir"/>
</dbReference>
<dbReference type="InterPro" id="IPR014759">
    <property type="entry name" value="Helicase_SF3_ssRNA_vir"/>
</dbReference>
<dbReference type="InterPro" id="IPR027417">
    <property type="entry name" value="P-loop_NTPase"/>
</dbReference>
<dbReference type="InterPro" id="IPR044067">
    <property type="entry name" value="PCV_3C_PRO"/>
</dbReference>
<dbReference type="InterPro" id="IPR000199">
    <property type="entry name" value="Peptidase_C3A/C3B_picornavir"/>
</dbReference>
<dbReference type="InterPro" id="IPR009003">
    <property type="entry name" value="Peptidase_S1_PA"/>
</dbReference>
<dbReference type="InterPro" id="IPR043504">
    <property type="entry name" value="Peptidase_S1_PA_chymotrypsin"/>
</dbReference>
<dbReference type="InterPro" id="IPR001676">
    <property type="entry name" value="Picornavirus_capsid"/>
</dbReference>
<dbReference type="InterPro" id="IPR043128">
    <property type="entry name" value="Rev_trsase/Diguanyl_cyclase"/>
</dbReference>
<dbReference type="InterPro" id="IPR033703">
    <property type="entry name" value="Rhv-like"/>
</dbReference>
<dbReference type="InterPro" id="IPR001205">
    <property type="entry name" value="RNA-dir_pol_C"/>
</dbReference>
<dbReference type="InterPro" id="IPR007094">
    <property type="entry name" value="RNA-dir_pol_PSvirus"/>
</dbReference>
<dbReference type="InterPro" id="IPR029053">
    <property type="entry name" value="Viral_coat"/>
</dbReference>
<dbReference type="Pfam" id="PF00548">
    <property type="entry name" value="Peptidase_C3"/>
    <property type="match status" value="1"/>
</dbReference>
<dbReference type="Pfam" id="PF00680">
    <property type="entry name" value="RdRP_1"/>
    <property type="match status" value="1"/>
</dbReference>
<dbReference type="Pfam" id="PF00073">
    <property type="entry name" value="Rhv"/>
    <property type="match status" value="2"/>
</dbReference>
<dbReference type="Pfam" id="PF22663">
    <property type="entry name" value="Rhv_5"/>
    <property type="match status" value="1"/>
</dbReference>
<dbReference type="Pfam" id="PF00910">
    <property type="entry name" value="RNA_helicase"/>
    <property type="match status" value="1"/>
</dbReference>
<dbReference type="PRINTS" id="PR00918">
    <property type="entry name" value="CALICVIRUSNS"/>
</dbReference>
<dbReference type="SUPFAM" id="SSF56672">
    <property type="entry name" value="DNA/RNA polymerases"/>
    <property type="match status" value="1"/>
</dbReference>
<dbReference type="SUPFAM" id="SSF52540">
    <property type="entry name" value="P-loop containing nucleoside triphosphate hydrolases"/>
    <property type="match status" value="1"/>
</dbReference>
<dbReference type="SUPFAM" id="SSF88633">
    <property type="entry name" value="Positive stranded ssRNA viruses"/>
    <property type="match status" value="2"/>
</dbReference>
<dbReference type="SUPFAM" id="SSF50494">
    <property type="entry name" value="Trypsin-like serine proteases"/>
    <property type="match status" value="1"/>
</dbReference>
<dbReference type="PROSITE" id="PS51874">
    <property type="entry name" value="PCV_3C_PRO"/>
    <property type="match status" value="1"/>
</dbReference>
<dbReference type="PROSITE" id="PS50507">
    <property type="entry name" value="RDRP_SSRNA_POS"/>
    <property type="match status" value="1"/>
</dbReference>
<dbReference type="PROSITE" id="PS51218">
    <property type="entry name" value="SF3_HELICASE_2"/>
    <property type="match status" value="1"/>
</dbReference>
<organismHost>
    <name type="scientific">Homo sapiens</name>
    <name type="common">Human</name>
    <dbReference type="NCBI Taxonomy" id="9606"/>
</organismHost>